<sequence>MREIISIHIGQAGIQVGNSCWELYCLEHGIQPDGTMPSDSTVGACHDAFNTFFSETSSGQHVPRAVFLDLEPTVIDEVRTGTYRQLFHPEQLISGKEDAANNFARGHYTVGREIVDTCLERLRKLADNCTGLQGFLVFNAVGGGTGSGLGSLLLERLSVDFGKKSKLGFTIYPSPQVSTAVVEPYNSVLSTHSLLEHTDVVVLLDNEAIYDICRRSLDIERPTYSNLNRLISQTISSLTTSLRFDGAINVDITEFQTNLVPYPRIHFMLSSYAPVISSAKAYHEQFSVPEITTSVFEPSNMMAKCDPRHGKYMACCLMYRGDVVPKDVNTAVAAIKAKRTIQFVDWCPTGFKCGINYQPPSVVPGGDLAKVQRAVCMISNNTAVAEVFSRIDHKFDLMYSKRAFVHWYVGEGMEEGEFSEAREDLAALEKDYEEVGGEGAEDDDEEGDEY</sequence>
<proteinExistence type="evidence at transcript level"/>
<gene>
    <name type="primary">TUBA1</name>
    <name type="synonym">TUA1</name>
    <name type="ordered locus">At1g64740</name>
    <name type="ORF">F13O11.5</name>
</gene>
<evidence type="ECO:0000250" key="1"/>
<evidence type="ECO:0000250" key="2">
    <source>
        <dbReference type="UniProtKB" id="P68363"/>
    </source>
</evidence>
<evidence type="ECO:0000250" key="3">
    <source>
        <dbReference type="UniProtKB" id="Q56WH1"/>
    </source>
</evidence>
<evidence type="ECO:0000256" key="4">
    <source>
        <dbReference type="SAM" id="MobiDB-lite"/>
    </source>
</evidence>
<evidence type="ECO:0000305" key="5"/>
<reference key="1">
    <citation type="journal article" date="1988" name="Plant Mol. Biol.">
        <title>The alpha-1-tubulin gene of Arabidopsis thaliana: primary structure and preferential expression in flowers.</title>
        <authorList>
            <person name="Ludwig S.R."/>
            <person name="Oppenheimer D.G."/>
            <person name="Silflow C.D."/>
            <person name="Snustad D.P."/>
        </authorList>
        <dbReference type="AGRICOLA" id="IND92000616"/>
    </citation>
    <scope>NUCLEOTIDE SEQUENCE</scope>
</reference>
<reference key="2">
    <citation type="journal article" date="2000" name="Nature">
        <title>Sequence and analysis of chromosome 1 of the plant Arabidopsis thaliana.</title>
        <authorList>
            <person name="Theologis A."/>
            <person name="Ecker J.R."/>
            <person name="Palm C.J."/>
            <person name="Federspiel N.A."/>
            <person name="Kaul S."/>
            <person name="White O."/>
            <person name="Alonso J."/>
            <person name="Altafi H."/>
            <person name="Araujo R."/>
            <person name="Bowman C.L."/>
            <person name="Brooks S.Y."/>
            <person name="Buehler E."/>
            <person name="Chan A."/>
            <person name="Chao Q."/>
            <person name="Chen H."/>
            <person name="Cheuk R.F."/>
            <person name="Chin C.W."/>
            <person name="Chung M.K."/>
            <person name="Conn L."/>
            <person name="Conway A.B."/>
            <person name="Conway A.R."/>
            <person name="Creasy T.H."/>
            <person name="Dewar K."/>
            <person name="Dunn P."/>
            <person name="Etgu P."/>
            <person name="Feldblyum T.V."/>
            <person name="Feng J.-D."/>
            <person name="Fong B."/>
            <person name="Fujii C.Y."/>
            <person name="Gill J.E."/>
            <person name="Goldsmith A.D."/>
            <person name="Haas B."/>
            <person name="Hansen N.F."/>
            <person name="Hughes B."/>
            <person name="Huizar L."/>
            <person name="Hunter J.L."/>
            <person name="Jenkins J."/>
            <person name="Johnson-Hopson C."/>
            <person name="Khan S."/>
            <person name="Khaykin E."/>
            <person name="Kim C.J."/>
            <person name="Koo H.L."/>
            <person name="Kremenetskaia I."/>
            <person name="Kurtz D.B."/>
            <person name="Kwan A."/>
            <person name="Lam B."/>
            <person name="Langin-Hooper S."/>
            <person name="Lee A."/>
            <person name="Lee J.M."/>
            <person name="Lenz C.A."/>
            <person name="Li J.H."/>
            <person name="Li Y.-P."/>
            <person name="Lin X."/>
            <person name="Liu S.X."/>
            <person name="Liu Z.A."/>
            <person name="Luros J.S."/>
            <person name="Maiti R."/>
            <person name="Marziali A."/>
            <person name="Militscher J."/>
            <person name="Miranda M."/>
            <person name="Nguyen M."/>
            <person name="Nierman W.C."/>
            <person name="Osborne B.I."/>
            <person name="Pai G."/>
            <person name="Peterson J."/>
            <person name="Pham P.K."/>
            <person name="Rizzo M."/>
            <person name="Rooney T."/>
            <person name="Rowley D."/>
            <person name="Sakano H."/>
            <person name="Salzberg S.L."/>
            <person name="Schwartz J.R."/>
            <person name="Shinn P."/>
            <person name="Southwick A.M."/>
            <person name="Sun H."/>
            <person name="Tallon L.J."/>
            <person name="Tambunga G."/>
            <person name="Toriumi M.J."/>
            <person name="Town C.D."/>
            <person name="Utterback T."/>
            <person name="Van Aken S."/>
            <person name="Vaysberg M."/>
            <person name="Vysotskaia V.S."/>
            <person name="Walker M."/>
            <person name="Wu D."/>
            <person name="Yu G."/>
            <person name="Fraser C.M."/>
            <person name="Venter J.C."/>
            <person name="Davis R.W."/>
        </authorList>
    </citation>
    <scope>NUCLEOTIDE SEQUENCE [LARGE SCALE GENOMIC DNA]</scope>
    <source>
        <strain>cv. Columbia</strain>
    </source>
</reference>
<reference key="3">
    <citation type="journal article" date="2017" name="Plant J.">
        <title>Araport11: a complete reannotation of the Arabidopsis thaliana reference genome.</title>
        <authorList>
            <person name="Cheng C.Y."/>
            <person name="Krishnakumar V."/>
            <person name="Chan A.P."/>
            <person name="Thibaud-Nissen F."/>
            <person name="Schobel S."/>
            <person name="Town C.D."/>
        </authorList>
    </citation>
    <scope>GENOME REANNOTATION</scope>
    <source>
        <strain>cv. Columbia</strain>
    </source>
</reference>
<reference key="4">
    <citation type="journal article" date="2003" name="Science">
        <title>Empirical analysis of transcriptional activity in the Arabidopsis genome.</title>
        <authorList>
            <person name="Yamada K."/>
            <person name="Lim J."/>
            <person name="Dale J.M."/>
            <person name="Chen H."/>
            <person name="Shinn P."/>
            <person name="Palm C.J."/>
            <person name="Southwick A.M."/>
            <person name="Wu H.C."/>
            <person name="Kim C.J."/>
            <person name="Nguyen M."/>
            <person name="Pham P.K."/>
            <person name="Cheuk R.F."/>
            <person name="Karlin-Newmann G."/>
            <person name="Liu S.X."/>
            <person name="Lam B."/>
            <person name="Sakano H."/>
            <person name="Wu T."/>
            <person name="Yu G."/>
            <person name="Miranda M."/>
            <person name="Quach H.L."/>
            <person name="Tripp M."/>
            <person name="Chang C.H."/>
            <person name="Lee J.M."/>
            <person name="Toriumi M.J."/>
            <person name="Chan M.M."/>
            <person name="Tang C.C."/>
            <person name="Onodera C.S."/>
            <person name="Deng J.M."/>
            <person name="Akiyama K."/>
            <person name="Ansari Y."/>
            <person name="Arakawa T."/>
            <person name="Banh J."/>
            <person name="Banno F."/>
            <person name="Bowser L."/>
            <person name="Brooks S.Y."/>
            <person name="Carninci P."/>
            <person name="Chao Q."/>
            <person name="Choy N."/>
            <person name="Enju A."/>
            <person name="Goldsmith A.D."/>
            <person name="Gurjal M."/>
            <person name="Hansen N.F."/>
            <person name="Hayashizaki Y."/>
            <person name="Johnson-Hopson C."/>
            <person name="Hsuan V.W."/>
            <person name="Iida K."/>
            <person name="Karnes M."/>
            <person name="Khan S."/>
            <person name="Koesema E."/>
            <person name="Ishida J."/>
            <person name="Jiang P.X."/>
            <person name="Jones T."/>
            <person name="Kawai J."/>
            <person name="Kamiya A."/>
            <person name="Meyers C."/>
            <person name="Nakajima M."/>
            <person name="Narusaka M."/>
            <person name="Seki M."/>
            <person name="Sakurai T."/>
            <person name="Satou M."/>
            <person name="Tamse R."/>
            <person name="Vaysberg M."/>
            <person name="Wallender E.K."/>
            <person name="Wong C."/>
            <person name="Yamamura Y."/>
            <person name="Yuan S."/>
            <person name="Shinozaki K."/>
            <person name="Davis R.W."/>
            <person name="Theologis A."/>
            <person name="Ecker J.R."/>
        </authorList>
    </citation>
    <scope>NUCLEOTIDE SEQUENCE [LARGE SCALE MRNA]</scope>
    <source>
        <strain>cv. Columbia</strain>
    </source>
</reference>
<accession>P11139</accession>
<keyword id="KW-0963">Cytoplasm</keyword>
<keyword id="KW-0206">Cytoskeleton</keyword>
<keyword id="KW-0342">GTP-binding</keyword>
<keyword id="KW-0378">Hydrolase</keyword>
<keyword id="KW-0460">Magnesium</keyword>
<keyword id="KW-0479">Metal-binding</keyword>
<keyword id="KW-0493">Microtubule</keyword>
<keyword id="KW-0547">Nucleotide-binding</keyword>
<keyword id="KW-0597">Phosphoprotein</keyword>
<keyword id="KW-1185">Reference proteome</keyword>
<organism>
    <name type="scientific">Arabidopsis thaliana</name>
    <name type="common">Mouse-ear cress</name>
    <dbReference type="NCBI Taxonomy" id="3702"/>
    <lineage>
        <taxon>Eukaryota</taxon>
        <taxon>Viridiplantae</taxon>
        <taxon>Streptophyta</taxon>
        <taxon>Embryophyta</taxon>
        <taxon>Tracheophyta</taxon>
        <taxon>Spermatophyta</taxon>
        <taxon>Magnoliopsida</taxon>
        <taxon>eudicotyledons</taxon>
        <taxon>Gunneridae</taxon>
        <taxon>Pentapetalae</taxon>
        <taxon>rosids</taxon>
        <taxon>malvids</taxon>
        <taxon>Brassicales</taxon>
        <taxon>Brassicaceae</taxon>
        <taxon>Camelineae</taxon>
        <taxon>Arabidopsis</taxon>
    </lineage>
</organism>
<name>TBA1_ARATH</name>
<comment type="function">
    <text>Tubulin is the major constituent of microtubules, a cylinder consisting of laterally associated linear protofilaments composed of alpha- and beta-tubulin heterodimers. Microtubules grow by the addition of GTP-tubulin dimers to the microtubule end, where a stabilizing cap forms. Below the cap, tubulin dimers are in GDP-bound state, owing to GTPase activity of alpha-tubulin.</text>
</comment>
<comment type="catalytic activity">
    <reaction evidence="2">
        <text>GTP + H2O = GDP + phosphate + H(+)</text>
        <dbReference type="Rhea" id="RHEA:19669"/>
        <dbReference type="ChEBI" id="CHEBI:15377"/>
        <dbReference type="ChEBI" id="CHEBI:15378"/>
        <dbReference type="ChEBI" id="CHEBI:37565"/>
        <dbReference type="ChEBI" id="CHEBI:43474"/>
        <dbReference type="ChEBI" id="CHEBI:58189"/>
    </reaction>
    <physiologicalReaction direction="left-to-right" evidence="2">
        <dbReference type="Rhea" id="RHEA:19670"/>
    </physiologicalReaction>
</comment>
<comment type="cofactor">
    <cofactor evidence="2">
        <name>Mg(2+)</name>
        <dbReference type="ChEBI" id="CHEBI:18420"/>
    </cofactor>
</comment>
<comment type="subunit">
    <text>Dimer of alpha and beta chains. A typical microtubule is a hollow water-filled tube with an outer diameter of 25 nm and an inner diameter of 15 nM. Alpha-beta heterodimers associate head-to-tail to form protofilaments running lengthwise along the microtubule wall with the beta-tubulin subunit facing the microtubule plus end conferring a structural polarity. Microtubules usually have 13 protofilaments but different protofilament numbers can be found in some organisms and specialized cells.</text>
</comment>
<comment type="subcellular location">
    <subcellularLocation>
        <location>Cytoplasm</location>
        <location>Cytoskeleton</location>
    </subcellularLocation>
</comment>
<comment type="PTM">
    <text evidence="1">Undergoes a tyrosination/detyrosination cycle, the cyclic removal and re-addition of a C-terminal tyrosine residue by the enzymes tubulin tyrosine carboxypeptidase (TTCP) and tubulin tyrosine ligase (TTL), respectively.</text>
</comment>
<comment type="miscellaneous">
    <text>There are six genes coding for alpha-tubulin.</text>
</comment>
<comment type="similarity">
    <text evidence="5">Belongs to the tubulin family.</text>
</comment>
<protein>
    <recommendedName>
        <fullName>Tubulin alpha-1 chain</fullName>
        <ecNumber evidence="2">3.6.5.-</ecNumber>
    </recommendedName>
</protein>
<dbReference type="EC" id="3.6.5.-" evidence="2"/>
<dbReference type="EMBL" id="M21414">
    <property type="protein sequence ID" value="AAA32880.1"/>
    <property type="molecule type" value="Genomic_DNA"/>
</dbReference>
<dbReference type="EMBL" id="AC006193">
    <property type="protein sequence ID" value="AAD38249.1"/>
    <property type="molecule type" value="Genomic_DNA"/>
</dbReference>
<dbReference type="EMBL" id="CP002684">
    <property type="protein sequence ID" value="AEE34279.1"/>
    <property type="molecule type" value="Genomic_DNA"/>
</dbReference>
<dbReference type="EMBL" id="AY059728">
    <property type="protein sequence ID" value="AAL24085.1"/>
    <property type="molecule type" value="mRNA"/>
</dbReference>
<dbReference type="EMBL" id="AY091372">
    <property type="protein sequence ID" value="AAM14311.1"/>
    <property type="molecule type" value="mRNA"/>
</dbReference>
<dbReference type="PIR" id="JA0062">
    <property type="entry name" value="UBMUAM"/>
</dbReference>
<dbReference type="RefSeq" id="NP_176654.1">
    <property type="nucleotide sequence ID" value="NM_105148.3"/>
</dbReference>
<dbReference type="SMR" id="P11139"/>
<dbReference type="BioGRID" id="28003">
    <property type="interactions" value="2"/>
</dbReference>
<dbReference type="FunCoup" id="P11139">
    <property type="interactions" value="1265"/>
</dbReference>
<dbReference type="STRING" id="3702.P11139"/>
<dbReference type="iPTMnet" id="P11139"/>
<dbReference type="SwissPalm" id="P11139"/>
<dbReference type="PaxDb" id="3702-AT1G64740.1"/>
<dbReference type="ProteomicsDB" id="234234"/>
<dbReference type="EnsemblPlants" id="AT1G64740.1">
    <property type="protein sequence ID" value="AT1G64740.1"/>
    <property type="gene ID" value="AT1G64740"/>
</dbReference>
<dbReference type="GeneID" id="842782"/>
<dbReference type="Gramene" id="AT1G64740.1">
    <property type="protein sequence ID" value="AT1G64740.1"/>
    <property type="gene ID" value="AT1G64740"/>
</dbReference>
<dbReference type="KEGG" id="ath:AT1G64740"/>
<dbReference type="Araport" id="AT1G64740"/>
<dbReference type="TAIR" id="AT1G64740">
    <property type="gene designation" value="TUA1"/>
</dbReference>
<dbReference type="eggNOG" id="KOG1376">
    <property type="taxonomic scope" value="Eukaryota"/>
</dbReference>
<dbReference type="HOGENOM" id="CLU_015718_0_0_1"/>
<dbReference type="InParanoid" id="P11139"/>
<dbReference type="OMA" id="NCLENEW"/>
<dbReference type="PhylomeDB" id="P11139"/>
<dbReference type="CD-CODE" id="33FCD62D">
    <property type="entry name" value="Centrosome"/>
</dbReference>
<dbReference type="CD-CODE" id="4299E36E">
    <property type="entry name" value="Nucleolus"/>
</dbReference>
<dbReference type="PRO" id="PR:P11139"/>
<dbReference type="Proteomes" id="UP000006548">
    <property type="component" value="Chromosome 1"/>
</dbReference>
<dbReference type="ExpressionAtlas" id="P11139">
    <property type="expression patterns" value="baseline and differential"/>
</dbReference>
<dbReference type="GO" id="GO:0005737">
    <property type="term" value="C:cytoplasm"/>
    <property type="evidence" value="ECO:0007669"/>
    <property type="project" value="UniProtKB-KW"/>
</dbReference>
<dbReference type="GO" id="GO:0005874">
    <property type="term" value="C:microtubule"/>
    <property type="evidence" value="ECO:0007669"/>
    <property type="project" value="UniProtKB-KW"/>
</dbReference>
<dbReference type="GO" id="GO:0005634">
    <property type="term" value="C:nucleus"/>
    <property type="evidence" value="ECO:0007005"/>
    <property type="project" value="TAIR"/>
</dbReference>
<dbReference type="GO" id="GO:0005886">
    <property type="term" value="C:plasma membrane"/>
    <property type="evidence" value="ECO:0007005"/>
    <property type="project" value="TAIR"/>
</dbReference>
<dbReference type="GO" id="GO:0005525">
    <property type="term" value="F:GTP binding"/>
    <property type="evidence" value="ECO:0007669"/>
    <property type="project" value="UniProtKB-KW"/>
</dbReference>
<dbReference type="GO" id="GO:0016787">
    <property type="term" value="F:hydrolase activity"/>
    <property type="evidence" value="ECO:0007669"/>
    <property type="project" value="UniProtKB-KW"/>
</dbReference>
<dbReference type="GO" id="GO:0046872">
    <property type="term" value="F:metal ion binding"/>
    <property type="evidence" value="ECO:0007669"/>
    <property type="project" value="UniProtKB-KW"/>
</dbReference>
<dbReference type="GO" id="GO:0005200">
    <property type="term" value="F:structural constituent of cytoskeleton"/>
    <property type="evidence" value="ECO:0007669"/>
    <property type="project" value="InterPro"/>
</dbReference>
<dbReference type="GO" id="GO:0007017">
    <property type="term" value="P:microtubule-based process"/>
    <property type="evidence" value="ECO:0000250"/>
    <property type="project" value="TAIR"/>
</dbReference>
<dbReference type="CDD" id="cd02186">
    <property type="entry name" value="alpha_tubulin"/>
    <property type="match status" value="1"/>
</dbReference>
<dbReference type="FunFam" id="1.10.287.600:FF:000001">
    <property type="entry name" value="Tubulin alpha chain"/>
    <property type="match status" value="1"/>
</dbReference>
<dbReference type="FunFam" id="3.30.1330.20:FF:000001">
    <property type="entry name" value="Tubulin alpha chain"/>
    <property type="match status" value="1"/>
</dbReference>
<dbReference type="FunFam" id="3.40.50.1440:FF:000004">
    <property type="entry name" value="Tubulin alpha chain"/>
    <property type="match status" value="1"/>
</dbReference>
<dbReference type="Gene3D" id="1.10.287.600">
    <property type="entry name" value="Helix hairpin bin"/>
    <property type="match status" value="1"/>
</dbReference>
<dbReference type="Gene3D" id="3.30.1330.20">
    <property type="entry name" value="Tubulin/FtsZ, C-terminal domain"/>
    <property type="match status" value="1"/>
</dbReference>
<dbReference type="Gene3D" id="3.40.50.1440">
    <property type="entry name" value="Tubulin/FtsZ, GTPase domain"/>
    <property type="match status" value="1"/>
</dbReference>
<dbReference type="InterPro" id="IPR002452">
    <property type="entry name" value="Alpha_tubulin"/>
</dbReference>
<dbReference type="InterPro" id="IPR013838">
    <property type="entry name" value="Beta-tubulin_BS"/>
</dbReference>
<dbReference type="InterPro" id="IPR008280">
    <property type="entry name" value="Tub_FtsZ_C"/>
</dbReference>
<dbReference type="InterPro" id="IPR000217">
    <property type="entry name" value="Tubulin"/>
</dbReference>
<dbReference type="InterPro" id="IPR037103">
    <property type="entry name" value="Tubulin/FtsZ-like_C"/>
</dbReference>
<dbReference type="InterPro" id="IPR018316">
    <property type="entry name" value="Tubulin/FtsZ_2-layer-sand-dom"/>
</dbReference>
<dbReference type="InterPro" id="IPR036525">
    <property type="entry name" value="Tubulin/FtsZ_GTPase_sf"/>
</dbReference>
<dbReference type="InterPro" id="IPR023123">
    <property type="entry name" value="Tubulin_C"/>
</dbReference>
<dbReference type="InterPro" id="IPR017975">
    <property type="entry name" value="Tubulin_CS"/>
</dbReference>
<dbReference type="InterPro" id="IPR003008">
    <property type="entry name" value="Tubulin_FtsZ_GTPase"/>
</dbReference>
<dbReference type="PANTHER" id="PTHR11588">
    <property type="entry name" value="TUBULIN"/>
    <property type="match status" value="1"/>
</dbReference>
<dbReference type="Pfam" id="PF00091">
    <property type="entry name" value="Tubulin"/>
    <property type="match status" value="1"/>
</dbReference>
<dbReference type="Pfam" id="PF03953">
    <property type="entry name" value="Tubulin_C"/>
    <property type="match status" value="1"/>
</dbReference>
<dbReference type="PRINTS" id="PR01162">
    <property type="entry name" value="ALPHATUBULIN"/>
</dbReference>
<dbReference type="PRINTS" id="PR01161">
    <property type="entry name" value="TUBULIN"/>
</dbReference>
<dbReference type="SMART" id="SM00864">
    <property type="entry name" value="Tubulin"/>
    <property type="match status" value="1"/>
</dbReference>
<dbReference type="SMART" id="SM00865">
    <property type="entry name" value="Tubulin_C"/>
    <property type="match status" value="1"/>
</dbReference>
<dbReference type="SUPFAM" id="SSF55307">
    <property type="entry name" value="Tubulin C-terminal domain-like"/>
    <property type="match status" value="1"/>
</dbReference>
<dbReference type="SUPFAM" id="SSF52490">
    <property type="entry name" value="Tubulin nucleotide-binding domain-like"/>
    <property type="match status" value="1"/>
</dbReference>
<dbReference type="PROSITE" id="PS00227">
    <property type="entry name" value="TUBULIN"/>
    <property type="match status" value="1"/>
</dbReference>
<feature type="chain" id="PRO_0000048136" description="Tubulin alpha-1 chain">
    <location>
        <begin position="1"/>
        <end position="450"/>
    </location>
</feature>
<feature type="region of interest" description="Disordered" evidence="4">
    <location>
        <begin position="431"/>
        <end position="450"/>
    </location>
</feature>
<feature type="active site" evidence="2">
    <location>
        <position position="254"/>
    </location>
</feature>
<feature type="binding site" evidence="2">
    <location>
        <position position="11"/>
    </location>
    <ligand>
        <name>GTP</name>
        <dbReference type="ChEBI" id="CHEBI:37565"/>
    </ligand>
</feature>
<feature type="binding site" evidence="2">
    <location>
        <position position="71"/>
    </location>
    <ligand>
        <name>GTP</name>
        <dbReference type="ChEBI" id="CHEBI:37565"/>
    </ligand>
</feature>
<feature type="binding site" evidence="2">
    <location>
        <position position="71"/>
    </location>
    <ligand>
        <name>Mg(2+)</name>
        <dbReference type="ChEBI" id="CHEBI:18420"/>
    </ligand>
</feature>
<feature type="binding site" evidence="2">
    <location>
        <position position="144"/>
    </location>
    <ligand>
        <name>GTP</name>
        <dbReference type="ChEBI" id="CHEBI:37565"/>
    </ligand>
</feature>
<feature type="binding site" evidence="2">
    <location>
        <position position="145"/>
    </location>
    <ligand>
        <name>GTP</name>
        <dbReference type="ChEBI" id="CHEBI:37565"/>
    </ligand>
</feature>
<feature type="binding site" evidence="2">
    <location>
        <position position="179"/>
    </location>
    <ligand>
        <name>GTP</name>
        <dbReference type="ChEBI" id="CHEBI:37565"/>
    </ligand>
</feature>
<feature type="binding site" evidence="2">
    <location>
        <position position="206"/>
    </location>
    <ligand>
        <name>GTP</name>
        <dbReference type="ChEBI" id="CHEBI:37565"/>
    </ligand>
</feature>
<feature type="binding site" evidence="2">
    <location>
        <position position="228"/>
    </location>
    <ligand>
        <name>GTP</name>
        <dbReference type="ChEBI" id="CHEBI:37565"/>
    </ligand>
</feature>
<feature type="site" description="Involved in polymerization">
    <location>
        <position position="450"/>
    </location>
</feature>
<feature type="modified residue" description="Phosphothreonine" evidence="3">
    <location>
        <position position="349"/>
    </location>
</feature>